<sequence length="146" mass="16445">MPSKGPLQSVQVFGRKKTATAVAHCKRGNGLIKVNGRPLEMIEPRTLQYKLLEPVLLLGKERFAGVDIRVRVKGGGHVAQIYAIRQSISKALVAYYQKYVDEASKKEIKDILIQYDRTLLVADPRRCESKKFGGPGARARYQKSYR</sequence>
<comment type="function">
    <text evidence="1">Component of the small ribosomal subunit. The ribosome is a large ribonucleoprotein complex responsible for the synthesis of proteins in the cell. Part of the small subunit (SSU) processome, first precursor of the small eukaryotic ribosomal subunit. During the assembly of the SSU processome in the nucleolus, many ribosome biogenesis factors, an RNA chaperone and ribosomal proteins associate with the nascent pre-rRNA and work in concert to generate RNA folding, modifications, rearrangements and cleavage as well as targeted degradation of pre-ribosomal RNA by the RNA exosome.</text>
</comment>
<comment type="subunit">
    <text evidence="1">Component of the small ribosomal subunit. Part of the small subunit (SSU) processome, composed of more than 70 proteins and the RNA chaperone small nucleolar RNA (snoRNA) U3.</text>
</comment>
<comment type="subcellular location">
    <subcellularLocation>
        <location evidence="1">Cytoplasm</location>
    </subcellularLocation>
    <subcellularLocation>
        <location evidence="1">Nucleus</location>
        <location evidence="1">Nucleolus</location>
    </subcellularLocation>
</comment>
<comment type="similarity">
    <text evidence="3">Belongs to the universal ribosomal protein uS9 family.</text>
</comment>
<organism>
    <name type="scientific">Rattus norvegicus</name>
    <name type="common">Rat</name>
    <dbReference type="NCBI Taxonomy" id="10116"/>
    <lineage>
        <taxon>Eukaryota</taxon>
        <taxon>Metazoa</taxon>
        <taxon>Chordata</taxon>
        <taxon>Craniata</taxon>
        <taxon>Vertebrata</taxon>
        <taxon>Euteleostomi</taxon>
        <taxon>Mammalia</taxon>
        <taxon>Eutheria</taxon>
        <taxon>Euarchontoglires</taxon>
        <taxon>Glires</taxon>
        <taxon>Rodentia</taxon>
        <taxon>Myomorpha</taxon>
        <taxon>Muroidea</taxon>
        <taxon>Muridae</taxon>
        <taxon>Murinae</taxon>
        <taxon>Rattus</taxon>
    </lineage>
</organism>
<evidence type="ECO:0000250" key="1">
    <source>
        <dbReference type="UniProtKB" id="P62249"/>
    </source>
</evidence>
<evidence type="ECO:0000269" key="2">
    <source>
    </source>
</evidence>
<evidence type="ECO:0000305" key="3"/>
<name>RS16_RAT</name>
<protein>
    <recommendedName>
        <fullName evidence="3">Small ribosomal subunit protein uS9</fullName>
    </recommendedName>
    <alternativeName>
        <fullName>40S ribosomal protein S16</fullName>
    </alternativeName>
</protein>
<gene>
    <name type="primary">Rps16</name>
</gene>
<keyword id="KW-0007">Acetylation</keyword>
<keyword id="KW-0963">Cytoplasm</keyword>
<keyword id="KW-0903">Direct protein sequencing</keyword>
<keyword id="KW-0539">Nucleus</keyword>
<keyword id="KW-0597">Phosphoprotein</keyword>
<keyword id="KW-1185">Reference proteome</keyword>
<keyword id="KW-0687">Ribonucleoprotein</keyword>
<keyword id="KW-0689">Ribosomal protein</keyword>
<accession>P62250</accession>
<accession>P17008</accession>
<reference key="1">
    <citation type="journal article" date="1990" name="FEBS Lett.">
        <title>The primary structure of rat ribosomal protein S16.</title>
        <authorList>
            <person name="Chan Y.-L."/>
            <person name="Paz V."/>
            <person name="Olvera J."/>
            <person name="Wool I.G."/>
        </authorList>
    </citation>
    <scope>NUCLEOTIDE SEQUENCE [MRNA]</scope>
    <scope>PROTEIN SEQUENCE OF 2-19</scope>
    <source>
        <strain>Sprague-Dawley</strain>
    </source>
</reference>
<feature type="initiator methionine" description="Removed" evidence="2">
    <location>
        <position position="1"/>
    </location>
</feature>
<feature type="chain" id="PRO_0000111482" description="Small ribosomal subunit protein uS9">
    <location>
        <begin position="2"/>
        <end position="146"/>
    </location>
</feature>
<feature type="modified residue" description="Phosphoserine" evidence="1">
    <location>
        <position position="3"/>
    </location>
</feature>
<feature type="modified residue" description="N6-acetyllysine" evidence="1">
    <location>
        <position position="60"/>
    </location>
</feature>
<proteinExistence type="evidence at protein level"/>
<dbReference type="EMBL" id="X17665">
    <property type="protein sequence ID" value="CAA35662.1"/>
    <property type="molecule type" value="mRNA"/>
</dbReference>
<dbReference type="PIR" id="S09041">
    <property type="entry name" value="R3RT16"/>
</dbReference>
<dbReference type="RefSeq" id="NP_001162617.1">
    <property type="nucleotide sequence ID" value="NM_001169146.1"/>
</dbReference>
<dbReference type="SMR" id="P62250"/>
<dbReference type="BioGRID" id="250819">
    <property type="interactions" value="5"/>
</dbReference>
<dbReference type="FunCoup" id="P62250">
    <property type="interactions" value="2040"/>
</dbReference>
<dbReference type="IntAct" id="P62250">
    <property type="interactions" value="5"/>
</dbReference>
<dbReference type="MINT" id="P62250"/>
<dbReference type="STRING" id="10116.ENSRNOP00000026576"/>
<dbReference type="iPTMnet" id="P62250"/>
<dbReference type="PhosphoSitePlus" id="P62250"/>
<dbReference type="jPOST" id="P62250"/>
<dbReference type="PaxDb" id="10116-ENSRNOP00000026576"/>
<dbReference type="GeneID" id="140655"/>
<dbReference type="KEGG" id="rno:140655"/>
<dbReference type="UCSC" id="RGD:621031">
    <property type="organism name" value="rat"/>
</dbReference>
<dbReference type="AGR" id="RGD:621031"/>
<dbReference type="CTD" id="6217"/>
<dbReference type="RGD" id="621031">
    <property type="gene designation" value="Rps16"/>
</dbReference>
<dbReference type="VEuPathDB" id="HostDB:ENSRNOG00000019578"/>
<dbReference type="eggNOG" id="KOG1753">
    <property type="taxonomic scope" value="Eukaryota"/>
</dbReference>
<dbReference type="HOGENOM" id="CLU_046483_4_0_1"/>
<dbReference type="InParanoid" id="P62250"/>
<dbReference type="OrthoDB" id="426865at2759"/>
<dbReference type="Reactome" id="R-RNO-156827">
    <property type="pathway name" value="L13a-mediated translational silencing of Ceruloplasmin expression"/>
</dbReference>
<dbReference type="Reactome" id="R-RNO-1799339">
    <property type="pathway name" value="SRP-dependent cotranslational protein targeting to membrane"/>
</dbReference>
<dbReference type="Reactome" id="R-RNO-6791226">
    <property type="pathway name" value="Major pathway of rRNA processing in the nucleolus and cytosol"/>
</dbReference>
<dbReference type="Reactome" id="R-RNO-72649">
    <property type="pathway name" value="Translation initiation complex formation"/>
</dbReference>
<dbReference type="Reactome" id="R-RNO-72689">
    <property type="pathway name" value="Formation of a pool of free 40S subunits"/>
</dbReference>
<dbReference type="Reactome" id="R-RNO-72695">
    <property type="pathway name" value="Formation of the ternary complex, and subsequently, the 43S complex"/>
</dbReference>
<dbReference type="Reactome" id="R-RNO-72702">
    <property type="pathway name" value="Ribosomal scanning and start codon recognition"/>
</dbReference>
<dbReference type="Reactome" id="R-RNO-72706">
    <property type="pathway name" value="GTP hydrolysis and joining of the 60S ribosomal subunit"/>
</dbReference>
<dbReference type="Reactome" id="R-RNO-975956">
    <property type="pathway name" value="Nonsense Mediated Decay (NMD) independent of the Exon Junction Complex (EJC)"/>
</dbReference>
<dbReference type="Reactome" id="R-RNO-975957">
    <property type="pathway name" value="Nonsense Mediated Decay (NMD) enhanced by the Exon Junction Complex (EJC)"/>
</dbReference>
<dbReference type="PRO" id="PR:P62250"/>
<dbReference type="Proteomes" id="UP000002494">
    <property type="component" value="Chromosome 1"/>
</dbReference>
<dbReference type="Bgee" id="ENSRNOG00000019578">
    <property type="expression patterns" value="Expressed in thymus and 20 other cell types or tissues"/>
</dbReference>
<dbReference type="ExpressionAtlas" id="P62250">
    <property type="expression patterns" value="baseline and differential"/>
</dbReference>
<dbReference type="GO" id="GO:0098556">
    <property type="term" value="C:cytoplasmic side of rough endoplasmic reticulum membrane"/>
    <property type="evidence" value="ECO:0000266"/>
    <property type="project" value="RGD"/>
</dbReference>
<dbReference type="GO" id="GO:0022626">
    <property type="term" value="C:cytosolic ribosome"/>
    <property type="evidence" value="ECO:0000266"/>
    <property type="project" value="RGD"/>
</dbReference>
<dbReference type="GO" id="GO:0022627">
    <property type="term" value="C:cytosolic small ribosomal subunit"/>
    <property type="evidence" value="ECO:0000314"/>
    <property type="project" value="RGD"/>
</dbReference>
<dbReference type="GO" id="GO:0005730">
    <property type="term" value="C:nucleolus"/>
    <property type="evidence" value="ECO:0007669"/>
    <property type="project" value="UniProtKB-SubCell"/>
</dbReference>
<dbReference type="GO" id="GO:0015935">
    <property type="term" value="C:small ribosomal subunit"/>
    <property type="evidence" value="ECO:0000250"/>
    <property type="project" value="UniProtKB"/>
</dbReference>
<dbReference type="GO" id="GO:0032040">
    <property type="term" value="C:small-subunit processome"/>
    <property type="evidence" value="ECO:0000250"/>
    <property type="project" value="UniProtKB"/>
</dbReference>
<dbReference type="GO" id="GO:0045202">
    <property type="term" value="C:synapse"/>
    <property type="evidence" value="ECO:0000266"/>
    <property type="project" value="RGD"/>
</dbReference>
<dbReference type="GO" id="GO:0003723">
    <property type="term" value="F:RNA binding"/>
    <property type="evidence" value="ECO:0000266"/>
    <property type="project" value="RGD"/>
</dbReference>
<dbReference type="GO" id="GO:0003735">
    <property type="term" value="F:structural constituent of ribosome"/>
    <property type="evidence" value="ECO:0000266"/>
    <property type="project" value="RGD"/>
</dbReference>
<dbReference type="GO" id="GO:1990830">
    <property type="term" value="P:cellular response to leukemia inhibitory factor"/>
    <property type="evidence" value="ECO:0000266"/>
    <property type="project" value="RGD"/>
</dbReference>
<dbReference type="GO" id="GO:0097421">
    <property type="term" value="P:liver regeneration"/>
    <property type="evidence" value="ECO:0000270"/>
    <property type="project" value="RGD"/>
</dbReference>
<dbReference type="GO" id="GO:0000462">
    <property type="term" value="P:maturation of SSU-rRNA from tricistronic rRNA transcript (SSU-rRNA, 5.8S rRNA, LSU-rRNA)"/>
    <property type="evidence" value="ECO:0000318"/>
    <property type="project" value="GO_Central"/>
</dbReference>
<dbReference type="GO" id="GO:0042274">
    <property type="term" value="P:ribosomal small subunit biogenesis"/>
    <property type="evidence" value="ECO:0000250"/>
    <property type="project" value="UniProtKB"/>
</dbReference>
<dbReference type="GO" id="GO:0006364">
    <property type="term" value="P:rRNA processing"/>
    <property type="evidence" value="ECO:0000266"/>
    <property type="project" value="RGD"/>
</dbReference>
<dbReference type="GO" id="GO:0006412">
    <property type="term" value="P:translation"/>
    <property type="evidence" value="ECO:0000304"/>
    <property type="project" value="ProtInc"/>
</dbReference>
<dbReference type="FunFam" id="3.30.230.10:FF:000184">
    <property type="entry name" value="40S ribosomal protein S16"/>
    <property type="match status" value="1"/>
</dbReference>
<dbReference type="Gene3D" id="3.30.230.10">
    <property type="match status" value="1"/>
</dbReference>
<dbReference type="InterPro" id="IPR020568">
    <property type="entry name" value="Ribosomal_Su5_D2-typ_SF"/>
</dbReference>
<dbReference type="InterPro" id="IPR000754">
    <property type="entry name" value="Ribosomal_uS9"/>
</dbReference>
<dbReference type="InterPro" id="IPR020574">
    <property type="entry name" value="Ribosomal_uS9_CS"/>
</dbReference>
<dbReference type="InterPro" id="IPR014721">
    <property type="entry name" value="Ribsml_uS5_D2-typ_fold_subgr"/>
</dbReference>
<dbReference type="PANTHER" id="PTHR21569:SF16">
    <property type="entry name" value="RIBOSOMAL PROTEIN S16"/>
    <property type="match status" value="1"/>
</dbReference>
<dbReference type="PANTHER" id="PTHR21569">
    <property type="entry name" value="RIBOSOMAL PROTEIN S9"/>
    <property type="match status" value="1"/>
</dbReference>
<dbReference type="Pfam" id="PF00380">
    <property type="entry name" value="Ribosomal_S9"/>
    <property type="match status" value="1"/>
</dbReference>
<dbReference type="SUPFAM" id="SSF54211">
    <property type="entry name" value="Ribosomal protein S5 domain 2-like"/>
    <property type="match status" value="1"/>
</dbReference>
<dbReference type="PROSITE" id="PS00360">
    <property type="entry name" value="RIBOSOMAL_S9"/>
    <property type="match status" value="1"/>
</dbReference>